<reference key="1">
    <citation type="journal article" date="2006" name="J. Bacteriol.">
        <title>Complete genome sequence of Yersinia pestis strains Antiqua and Nepal516: evidence of gene reduction in an emerging pathogen.</title>
        <authorList>
            <person name="Chain P.S.G."/>
            <person name="Hu P."/>
            <person name="Malfatti S.A."/>
            <person name="Radnedge L."/>
            <person name="Larimer F."/>
            <person name="Vergez L.M."/>
            <person name="Worsham P."/>
            <person name="Chu M.C."/>
            <person name="Andersen G.L."/>
        </authorList>
    </citation>
    <scope>NUCLEOTIDE SEQUENCE [LARGE SCALE GENOMIC DNA]</scope>
    <source>
        <strain>Antiqua</strain>
    </source>
</reference>
<gene>
    <name evidence="1" type="primary">trpB</name>
    <name type="ordered locus">YPA_1564</name>
</gene>
<protein>
    <recommendedName>
        <fullName evidence="1">Tryptophan synthase beta chain</fullName>
        <ecNumber evidence="1">4.2.1.20</ecNumber>
    </recommendedName>
</protein>
<feature type="chain" id="PRO_1000018425" description="Tryptophan synthase beta chain">
    <location>
        <begin position="1"/>
        <end position="396"/>
    </location>
</feature>
<feature type="modified residue" description="N6-(pyridoxal phosphate)lysine" evidence="1">
    <location>
        <position position="86"/>
    </location>
</feature>
<name>TRPB_YERPA</name>
<sequence>MTTLNPYFGEFGGMYVPQILVPALKQLEDAFVSAQLDPEFQAAFQDLLKNYAGRPTALTLCQNLTKGTKTKLYLKREDLLHGGAHKTNQVLGQALLAKRMGKTEIIAETGAGQHGVASALACALLGLKCRIYMGAKDIERQSPNVFRMRLMGAEVIPVHSGSSTLKDACNEALRDWSGTYETAHYMLGTAAGPHPYPTIVREFQRMIGEETKAQILEKEGRLPDAVLACVGGGSNAIGMFADFIDEPDVGLIGVEPAGLGIETGQHGAPLKHGKVGIYFGMKSPMMQTSDGQIEESYSISAGLDFPSVGPQHAYLNSIGRADYVSITDDEALDAFKTLSCKEGIIPALESSHALAHALKMIKADPDKEQILVVNLSGRGDKDIFTVHDILKARGEI</sequence>
<comment type="function">
    <text evidence="1">The beta subunit is responsible for the synthesis of L-tryptophan from indole and L-serine.</text>
</comment>
<comment type="catalytic activity">
    <reaction evidence="1">
        <text>(1S,2R)-1-C-(indol-3-yl)glycerol 3-phosphate + L-serine = D-glyceraldehyde 3-phosphate + L-tryptophan + H2O</text>
        <dbReference type="Rhea" id="RHEA:10532"/>
        <dbReference type="ChEBI" id="CHEBI:15377"/>
        <dbReference type="ChEBI" id="CHEBI:33384"/>
        <dbReference type="ChEBI" id="CHEBI:57912"/>
        <dbReference type="ChEBI" id="CHEBI:58866"/>
        <dbReference type="ChEBI" id="CHEBI:59776"/>
        <dbReference type="EC" id="4.2.1.20"/>
    </reaction>
</comment>
<comment type="cofactor">
    <cofactor evidence="1">
        <name>pyridoxal 5'-phosphate</name>
        <dbReference type="ChEBI" id="CHEBI:597326"/>
    </cofactor>
</comment>
<comment type="pathway">
    <text evidence="1">Amino-acid biosynthesis; L-tryptophan biosynthesis; L-tryptophan from chorismate: step 5/5.</text>
</comment>
<comment type="subunit">
    <text evidence="1">Tetramer of two alpha and two beta chains.</text>
</comment>
<comment type="similarity">
    <text evidence="1">Belongs to the TrpB family.</text>
</comment>
<organism>
    <name type="scientific">Yersinia pestis bv. Antiqua (strain Antiqua)</name>
    <dbReference type="NCBI Taxonomy" id="360102"/>
    <lineage>
        <taxon>Bacteria</taxon>
        <taxon>Pseudomonadati</taxon>
        <taxon>Pseudomonadota</taxon>
        <taxon>Gammaproteobacteria</taxon>
        <taxon>Enterobacterales</taxon>
        <taxon>Yersiniaceae</taxon>
        <taxon>Yersinia</taxon>
    </lineage>
</organism>
<keyword id="KW-0028">Amino-acid biosynthesis</keyword>
<keyword id="KW-0057">Aromatic amino acid biosynthesis</keyword>
<keyword id="KW-0456">Lyase</keyword>
<keyword id="KW-0663">Pyridoxal phosphate</keyword>
<keyword id="KW-0822">Tryptophan biosynthesis</keyword>
<accession>Q1C7P2</accession>
<evidence type="ECO:0000255" key="1">
    <source>
        <dbReference type="HAMAP-Rule" id="MF_00133"/>
    </source>
</evidence>
<dbReference type="EC" id="4.2.1.20" evidence="1"/>
<dbReference type="EMBL" id="CP000308">
    <property type="protein sequence ID" value="ABG13530.1"/>
    <property type="molecule type" value="Genomic_DNA"/>
</dbReference>
<dbReference type="RefSeq" id="WP_002210633.1">
    <property type="nucleotide sequence ID" value="NZ_CP009906.1"/>
</dbReference>
<dbReference type="SMR" id="Q1C7P2"/>
<dbReference type="GeneID" id="57976463"/>
<dbReference type="KEGG" id="ypa:YPA_1564"/>
<dbReference type="UniPathway" id="UPA00035">
    <property type="reaction ID" value="UER00044"/>
</dbReference>
<dbReference type="Proteomes" id="UP000001971">
    <property type="component" value="Chromosome"/>
</dbReference>
<dbReference type="GO" id="GO:0005737">
    <property type="term" value="C:cytoplasm"/>
    <property type="evidence" value="ECO:0007669"/>
    <property type="project" value="TreeGrafter"/>
</dbReference>
<dbReference type="GO" id="GO:0004834">
    <property type="term" value="F:tryptophan synthase activity"/>
    <property type="evidence" value="ECO:0007669"/>
    <property type="project" value="UniProtKB-UniRule"/>
</dbReference>
<dbReference type="CDD" id="cd06446">
    <property type="entry name" value="Trp-synth_B"/>
    <property type="match status" value="1"/>
</dbReference>
<dbReference type="FunFam" id="3.40.50.1100:FF:000001">
    <property type="entry name" value="Tryptophan synthase beta chain"/>
    <property type="match status" value="1"/>
</dbReference>
<dbReference type="FunFam" id="3.40.50.1100:FF:000004">
    <property type="entry name" value="Tryptophan synthase beta chain"/>
    <property type="match status" value="1"/>
</dbReference>
<dbReference type="Gene3D" id="3.40.50.1100">
    <property type="match status" value="2"/>
</dbReference>
<dbReference type="HAMAP" id="MF_00133">
    <property type="entry name" value="Trp_synth_beta"/>
    <property type="match status" value="1"/>
</dbReference>
<dbReference type="InterPro" id="IPR006653">
    <property type="entry name" value="Trp_synth_b_CS"/>
</dbReference>
<dbReference type="InterPro" id="IPR006654">
    <property type="entry name" value="Trp_synth_beta"/>
</dbReference>
<dbReference type="InterPro" id="IPR023026">
    <property type="entry name" value="Trp_synth_beta/beta-like"/>
</dbReference>
<dbReference type="InterPro" id="IPR001926">
    <property type="entry name" value="TrpB-like_PALP"/>
</dbReference>
<dbReference type="InterPro" id="IPR036052">
    <property type="entry name" value="TrpB-like_PALP_sf"/>
</dbReference>
<dbReference type="NCBIfam" id="TIGR00263">
    <property type="entry name" value="trpB"/>
    <property type="match status" value="1"/>
</dbReference>
<dbReference type="PANTHER" id="PTHR48077:SF3">
    <property type="entry name" value="TRYPTOPHAN SYNTHASE"/>
    <property type="match status" value="1"/>
</dbReference>
<dbReference type="PANTHER" id="PTHR48077">
    <property type="entry name" value="TRYPTOPHAN SYNTHASE-RELATED"/>
    <property type="match status" value="1"/>
</dbReference>
<dbReference type="Pfam" id="PF00291">
    <property type="entry name" value="PALP"/>
    <property type="match status" value="1"/>
</dbReference>
<dbReference type="PIRSF" id="PIRSF001413">
    <property type="entry name" value="Trp_syn_beta"/>
    <property type="match status" value="1"/>
</dbReference>
<dbReference type="SUPFAM" id="SSF53686">
    <property type="entry name" value="Tryptophan synthase beta subunit-like PLP-dependent enzymes"/>
    <property type="match status" value="1"/>
</dbReference>
<dbReference type="PROSITE" id="PS00168">
    <property type="entry name" value="TRP_SYNTHASE_BETA"/>
    <property type="match status" value="1"/>
</dbReference>
<proteinExistence type="inferred from homology"/>